<proteinExistence type="inferred from homology"/>
<reference key="1">
    <citation type="journal article" date="2009" name="J. Bacteriol.">
        <title>Complete genome sequence of Macrococcus caseolyticus strain JCSCS5402, reflecting the ancestral genome of the human-pathogenic staphylococci.</title>
        <authorList>
            <person name="Baba T."/>
            <person name="Kuwahara-Arai K."/>
            <person name="Uchiyama I."/>
            <person name="Takeuchi F."/>
            <person name="Ito T."/>
            <person name="Hiramatsu K."/>
        </authorList>
    </citation>
    <scope>NUCLEOTIDE SEQUENCE [LARGE SCALE GENOMIC DNA]</scope>
    <source>
        <strain>JCSC5402</strain>
    </source>
</reference>
<protein>
    <recommendedName>
        <fullName evidence="1">Large ribosomal subunit protein uL16</fullName>
    </recommendedName>
    <alternativeName>
        <fullName evidence="3">50S ribosomal protein L16</fullName>
    </alternativeName>
</protein>
<organism>
    <name type="scientific">Macrococcus caseolyticus (strain JCSC5402)</name>
    <name type="common">Macrococcoides caseolyticum</name>
    <dbReference type="NCBI Taxonomy" id="458233"/>
    <lineage>
        <taxon>Bacteria</taxon>
        <taxon>Bacillati</taxon>
        <taxon>Bacillota</taxon>
        <taxon>Bacilli</taxon>
        <taxon>Bacillales</taxon>
        <taxon>Staphylococcaceae</taxon>
        <taxon>Macrococcoides</taxon>
    </lineage>
</organism>
<dbReference type="EMBL" id="AP009484">
    <property type="protein sequence ID" value="BAH16909.1"/>
    <property type="molecule type" value="Genomic_DNA"/>
</dbReference>
<dbReference type="RefSeq" id="WP_012656113.1">
    <property type="nucleotide sequence ID" value="NC_011999.1"/>
</dbReference>
<dbReference type="SMR" id="B9E9J8"/>
<dbReference type="STRING" id="458233.MCCL_0202"/>
<dbReference type="KEGG" id="mcl:MCCL_0202"/>
<dbReference type="eggNOG" id="COG0197">
    <property type="taxonomic scope" value="Bacteria"/>
</dbReference>
<dbReference type="HOGENOM" id="CLU_078858_2_1_9"/>
<dbReference type="OrthoDB" id="9802589at2"/>
<dbReference type="Proteomes" id="UP000001383">
    <property type="component" value="Chromosome"/>
</dbReference>
<dbReference type="GO" id="GO:0022625">
    <property type="term" value="C:cytosolic large ribosomal subunit"/>
    <property type="evidence" value="ECO:0007669"/>
    <property type="project" value="TreeGrafter"/>
</dbReference>
<dbReference type="GO" id="GO:0019843">
    <property type="term" value="F:rRNA binding"/>
    <property type="evidence" value="ECO:0007669"/>
    <property type="project" value="UniProtKB-UniRule"/>
</dbReference>
<dbReference type="GO" id="GO:0003735">
    <property type="term" value="F:structural constituent of ribosome"/>
    <property type="evidence" value="ECO:0007669"/>
    <property type="project" value="InterPro"/>
</dbReference>
<dbReference type="GO" id="GO:0000049">
    <property type="term" value="F:tRNA binding"/>
    <property type="evidence" value="ECO:0007669"/>
    <property type="project" value="UniProtKB-KW"/>
</dbReference>
<dbReference type="GO" id="GO:0006412">
    <property type="term" value="P:translation"/>
    <property type="evidence" value="ECO:0007669"/>
    <property type="project" value="UniProtKB-UniRule"/>
</dbReference>
<dbReference type="CDD" id="cd01433">
    <property type="entry name" value="Ribosomal_L16_L10e"/>
    <property type="match status" value="1"/>
</dbReference>
<dbReference type="FunFam" id="3.90.1170.10:FF:000001">
    <property type="entry name" value="50S ribosomal protein L16"/>
    <property type="match status" value="1"/>
</dbReference>
<dbReference type="Gene3D" id="3.90.1170.10">
    <property type="entry name" value="Ribosomal protein L10e/L16"/>
    <property type="match status" value="1"/>
</dbReference>
<dbReference type="HAMAP" id="MF_01342">
    <property type="entry name" value="Ribosomal_uL16"/>
    <property type="match status" value="1"/>
</dbReference>
<dbReference type="InterPro" id="IPR047873">
    <property type="entry name" value="Ribosomal_uL16"/>
</dbReference>
<dbReference type="InterPro" id="IPR000114">
    <property type="entry name" value="Ribosomal_uL16_bact-type"/>
</dbReference>
<dbReference type="InterPro" id="IPR020798">
    <property type="entry name" value="Ribosomal_uL16_CS"/>
</dbReference>
<dbReference type="InterPro" id="IPR016180">
    <property type="entry name" value="Ribosomal_uL16_dom"/>
</dbReference>
<dbReference type="InterPro" id="IPR036920">
    <property type="entry name" value="Ribosomal_uL16_sf"/>
</dbReference>
<dbReference type="NCBIfam" id="TIGR01164">
    <property type="entry name" value="rplP_bact"/>
    <property type="match status" value="1"/>
</dbReference>
<dbReference type="PANTHER" id="PTHR12220">
    <property type="entry name" value="50S/60S RIBOSOMAL PROTEIN L16"/>
    <property type="match status" value="1"/>
</dbReference>
<dbReference type="PANTHER" id="PTHR12220:SF13">
    <property type="entry name" value="LARGE RIBOSOMAL SUBUNIT PROTEIN UL16M"/>
    <property type="match status" value="1"/>
</dbReference>
<dbReference type="Pfam" id="PF00252">
    <property type="entry name" value="Ribosomal_L16"/>
    <property type="match status" value="1"/>
</dbReference>
<dbReference type="PRINTS" id="PR00060">
    <property type="entry name" value="RIBOSOMALL16"/>
</dbReference>
<dbReference type="SUPFAM" id="SSF54686">
    <property type="entry name" value="Ribosomal protein L16p/L10e"/>
    <property type="match status" value="1"/>
</dbReference>
<dbReference type="PROSITE" id="PS00586">
    <property type="entry name" value="RIBOSOMAL_L16_1"/>
    <property type="match status" value="1"/>
</dbReference>
<dbReference type="PROSITE" id="PS00701">
    <property type="entry name" value="RIBOSOMAL_L16_2"/>
    <property type="match status" value="1"/>
</dbReference>
<accession>B9E9J8</accession>
<comment type="function">
    <text evidence="1">Binds 23S rRNA and is also seen to make contacts with the A and possibly P site tRNAs.</text>
</comment>
<comment type="subunit">
    <text evidence="1">Part of the 50S ribosomal subunit.</text>
</comment>
<comment type="similarity">
    <text evidence="1">Belongs to the universal ribosomal protein uL16 family.</text>
</comment>
<sequence length="144" mass="16208">MLLPKRVKYRRQHRPKTTGRSKGGNEVTFGEYGLQATTAAWITSRQIESARIAMTRYMKRGGKVWIKIFPHTPYTKKPLEVRMGSGKGAVEGWVAVVKPGRIMFEIAGVPEEVAREALRLASHKLPVKTKFVKREELGGDTNES</sequence>
<keyword id="KW-1185">Reference proteome</keyword>
<keyword id="KW-0687">Ribonucleoprotein</keyword>
<keyword id="KW-0689">Ribosomal protein</keyword>
<keyword id="KW-0694">RNA-binding</keyword>
<keyword id="KW-0699">rRNA-binding</keyword>
<keyword id="KW-0820">tRNA-binding</keyword>
<evidence type="ECO:0000255" key="1">
    <source>
        <dbReference type="HAMAP-Rule" id="MF_01342"/>
    </source>
</evidence>
<evidence type="ECO:0000256" key="2">
    <source>
        <dbReference type="SAM" id="MobiDB-lite"/>
    </source>
</evidence>
<evidence type="ECO:0000305" key="3"/>
<gene>
    <name evidence="1" type="primary">rplP</name>
    <name type="ordered locus">MCCL_0202</name>
</gene>
<name>RL16_MACCJ</name>
<feature type="chain" id="PRO_1000166365" description="Large ribosomal subunit protein uL16">
    <location>
        <begin position="1"/>
        <end position="144"/>
    </location>
</feature>
<feature type="region of interest" description="Disordered" evidence="2">
    <location>
        <begin position="1"/>
        <end position="26"/>
    </location>
</feature>
<feature type="compositionally biased region" description="Basic residues" evidence="2">
    <location>
        <begin position="1"/>
        <end position="19"/>
    </location>
</feature>